<protein>
    <recommendedName>
        <fullName evidence="1">ATP-dependent Clp protease ATP-binding subunit ClpX</fullName>
    </recommendedName>
</protein>
<accession>B0C146</accession>
<proteinExistence type="inferred from homology"/>
<sequence length="447" mass="49540">MSKYDSHLKCSFCGKSQEQVRKLIAGPGVYICDECVDLCNEILDEELFDTASSMPAASRAPVAERKRSQSAPLSLNQIPKPRDIKSYLDEHVIGQDEAKKVLSVAVYNHYKRLSISQASADSVAELDDAIELQKSNILLIGPTGCGKTLLAQTLAQMLDVPFAVADATTLTEAGYVGEDVENILLRLLQVADLDVEEAQRGIIYIDEIDKVARKSENPSITRDVSGEGVQQALLKMLEGTVANVPPQGGRKHPYQDCIQIDTTNILFICGGAFVGLDKIIEQRTGKKAMGFIQDGELRAKEQRTADMLRDLEAEDLVKFGMIPEFTGRIPVMSVIDALDEDVLCQILTEPRNALVKQYQKLLRMDRVELEFQPDAIRAIAQEAYRRRTGARALRAIVEEIMLDVMYELPSQSRKELTQCLITRSMVEQRSTAELLVHPSAISTPESA</sequence>
<evidence type="ECO:0000255" key="1">
    <source>
        <dbReference type="HAMAP-Rule" id="MF_00175"/>
    </source>
</evidence>
<evidence type="ECO:0000255" key="2">
    <source>
        <dbReference type="PROSITE-ProRule" id="PRU01250"/>
    </source>
</evidence>
<feature type="chain" id="PRO_1000077142" description="ATP-dependent Clp protease ATP-binding subunit ClpX">
    <location>
        <begin position="1"/>
        <end position="447"/>
    </location>
</feature>
<feature type="domain" description="ClpX-type ZB" evidence="2">
    <location>
        <begin position="1"/>
        <end position="51"/>
    </location>
</feature>
<feature type="binding site" evidence="2">
    <location>
        <position position="10"/>
    </location>
    <ligand>
        <name>Zn(2+)</name>
        <dbReference type="ChEBI" id="CHEBI:29105"/>
    </ligand>
</feature>
<feature type="binding site" evidence="2">
    <location>
        <position position="13"/>
    </location>
    <ligand>
        <name>Zn(2+)</name>
        <dbReference type="ChEBI" id="CHEBI:29105"/>
    </ligand>
</feature>
<feature type="binding site" evidence="2">
    <location>
        <position position="32"/>
    </location>
    <ligand>
        <name>Zn(2+)</name>
        <dbReference type="ChEBI" id="CHEBI:29105"/>
    </ligand>
</feature>
<feature type="binding site" evidence="2">
    <location>
        <position position="35"/>
    </location>
    <ligand>
        <name>Zn(2+)</name>
        <dbReference type="ChEBI" id="CHEBI:29105"/>
    </ligand>
</feature>
<feature type="binding site" evidence="1">
    <location>
        <begin position="142"/>
        <end position="149"/>
    </location>
    <ligand>
        <name>ATP</name>
        <dbReference type="ChEBI" id="CHEBI:30616"/>
    </ligand>
</feature>
<reference key="1">
    <citation type="journal article" date="2008" name="Proc. Natl. Acad. Sci. U.S.A.">
        <title>Niche adaptation and genome expansion in the chlorophyll d-producing cyanobacterium Acaryochloris marina.</title>
        <authorList>
            <person name="Swingley W.D."/>
            <person name="Chen M."/>
            <person name="Cheung P.C."/>
            <person name="Conrad A.L."/>
            <person name="Dejesa L.C."/>
            <person name="Hao J."/>
            <person name="Honchak B.M."/>
            <person name="Karbach L.E."/>
            <person name="Kurdoglu A."/>
            <person name="Lahiri S."/>
            <person name="Mastrian S.D."/>
            <person name="Miyashita H."/>
            <person name="Page L."/>
            <person name="Ramakrishna P."/>
            <person name="Satoh S."/>
            <person name="Sattley W.M."/>
            <person name="Shimada Y."/>
            <person name="Taylor H.L."/>
            <person name="Tomo T."/>
            <person name="Tsuchiya T."/>
            <person name="Wang Z.T."/>
            <person name="Raymond J."/>
            <person name="Mimuro M."/>
            <person name="Blankenship R.E."/>
            <person name="Touchman J.W."/>
        </authorList>
    </citation>
    <scope>NUCLEOTIDE SEQUENCE [LARGE SCALE GENOMIC DNA]</scope>
    <source>
        <strain>MBIC 11017</strain>
    </source>
</reference>
<organism>
    <name type="scientific">Acaryochloris marina (strain MBIC 11017)</name>
    <dbReference type="NCBI Taxonomy" id="329726"/>
    <lineage>
        <taxon>Bacteria</taxon>
        <taxon>Bacillati</taxon>
        <taxon>Cyanobacteriota</taxon>
        <taxon>Cyanophyceae</taxon>
        <taxon>Acaryochloridales</taxon>
        <taxon>Acaryochloridaceae</taxon>
        <taxon>Acaryochloris</taxon>
    </lineage>
</organism>
<dbReference type="EMBL" id="CP000828">
    <property type="protein sequence ID" value="ABW28444.1"/>
    <property type="molecule type" value="Genomic_DNA"/>
</dbReference>
<dbReference type="RefSeq" id="WP_012163842.1">
    <property type="nucleotide sequence ID" value="NC_009925.1"/>
</dbReference>
<dbReference type="SMR" id="B0C146"/>
<dbReference type="STRING" id="329726.AM1_3450"/>
<dbReference type="KEGG" id="amr:AM1_3450"/>
<dbReference type="eggNOG" id="COG1219">
    <property type="taxonomic scope" value="Bacteria"/>
</dbReference>
<dbReference type="HOGENOM" id="CLU_014218_8_2_3"/>
<dbReference type="OrthoDB" id="9804062at2"/>
<dbReference type="Proteomes" id="UP000000268">
    <property type="component" value="Chromosome"/>
</dbReference>
<dbReference type="GO" id="GO:0009376">
    <property type="term" value="C:HslUV protease complex"/>
    <property type="evidence" value="ECO:0007669"/>
    <property type="project" value="TreeGrafter"/>
</dbReference>
<dbReference type="GO" id="GO:0005524">
    <property type="term" value="F:ATP binding"/>
    <property type="evidence" value="ECO:0007669"/>
    <property type="project" value="UniProtKB-UniRule"/>
</dbReference>
<dbReference type="GO" id="GO:0016887">
    <property type="term" value="F:ATP hydrolysis activity"/>
    <property type="evidence" value="ECO:0007669"/>
    <property type="project" value="InterPro"/>
</dbReference>
<dbReference type="GO" id="GO:0140662">
    <property type="term" value="F:ATP-dependent protein folding chaperone"/>
    <property type="evidence" value="ECO:0007669"/>
    <property type="project" value="InterPro"/>
</dbReference>
<dbReference type="GO" id="GO:0046983">
    <property type="term" value="F:protein dimerization activity"/>
    <property type="evidence" value="ECO:0007669"/>
    <property type="project" value="InterPro"/>
</dbReference>
<dbReference type="GO" id="GO:0051082">
    <property type="term" value="F:unfolded protein binding"/>
    <property type="evidence" value="ECO:0007669"/>
    <property type="project" value="UniProtKB-UniRule"/>
</dbReference>
<dbReference type="GO" id="GO:0008270">
    <property type="term" value="F:zinc ion binding"/>
    <property type="evidence" value="ECO:0007669"/>
    <property type="project" value="InterPro"/>
</dbReference>
<dbReference type="GO" id="GO:0051301">
    <property type="term" value="P:cell division"/>
    <property type="evidence" value="ECO:0007669"/>
    <property type="project" value="TreeGrafter"/>
</dbReference>
<dbReference type="GO" id="GO:0051603">
    <property type="term" value="P:proteolysis involved in protein catabolic process"/>
    <property type="evidence" value="ECO:0007669"/>
    <property type="project" value="TreeGrafter"/>
</dbReference>
<dbReference type="CDD" id="cd19497">
    <property type="entry name" value="RecA-like_ClpX"/>
    <property type="match status" value="1"/>
</dbReference>
<dbReference type="FunFam" id="1.10.8.60:FF:000002">
    <property type="entry name" value="ATP-dependent Clp protease ATP-binding subunit ClpX"/>
    <property type="match status" value="1"/>
</dbReference>
<dbReference type="FunFam" id="3.40.50.300:FF:000005">
    <property type="entry name" value="ATP-dependent Clp protease ATP-binding subunit ClpX"/>
    <property type="match status" value="1"/>
</dbReference>
<dbReference type="Gene3D" id="1.10.8.60">
    <property type="match status" value="1"/>
</dbReference>
<dbReference type="Gene3D" id="6.20.220.10">
    <property type="entry name" value="ClpX chaperone, C4-type zinc finger domain"/>
    <property type="match status" value="1"/>
</dbReference>
<dbReference type="Gene3D" id="3.40.50.300">
    <property type="entry name" value="P-loop containing nucleotide triphosphate hydrolases"/>
    <property type="match status" value="1"/>
</dbReference>
<dbReference type="HAMAP" id="MF_00175">
    <property type="entry name" value="ClpX"/>
    <property type="match status" value="1"/>
</dbReference>
<dbReference type="InterPro" id="IPR003593">
    <property type="entry name" value="AAA+_ATPase"/>
</dbReference>
<dbReference type="InterPro" id="IPR050052">
    <property type="entry name" value="ATP-dep_Clp_protease_ClpX"/>
</dbReference>
<dbReference type="InterPro" id="IPR003959">
    <property type="entry name" value="ATPase_AAA_core"/>
</dbReference>
<dbReference type="InterPro" id="IPR019489">
    <property type="entry name" value="Clp_ATPase_C"/>
</dbReference>
<dbReference type="InterPro" id="IPR004487">
    <property type="entry name" value="Clp_protease_ATP-bd_su_ClpX"/>
</dbReference>
<dbReference type="InterPro" id="IPR046425">
    <property type="entry name" value="ClpX_bact"/>
</dbReference>
<dbReference type="InterPro" id="IPR027417">
    <property type="entry name" value="P-loop_NTPase"/>
</dbReference>
<dbReference type="InterPro" id="IPR010603">
    <property type="entry name" value="Znf_CppX_C4"/>
</dbReference>
<dbReference type="InterPro" id="IPR038366">
    <property type="entry name" value="Znf_CppX_C4_sf"/>
</dbReference>
<dbReference type="NCBIfam" id="TIGR00382">
    <property type="entry name" value="clpX"/>
    <property type="match status" value="1"/>
</dbReference>
<dbReference type="NCBIfam" id="NF003745">
    <property type="entry name" value="PRK05342.1"/>
    <property type="match status" value="1"/>
</dbReference>
<dbReference type="PANTHER" id="PTHR48102:SF7">
    <property type="entry name" value="ATP-DEPENDENT CLP PROTEASE ATP-BINDING SUBUNIT CLPX-LIKE, MITOCHONDRIAL"/>
    <property type="match status" value="1"/>
</dbReference>
<dbReference type="PANTHER" id="PTHR48102">
    <property type="entry name" value="ATP-DEPENDENT CLP PROTEASE ATP-BINDING SUBUNIT CLPX-LIKE, MITOCHONDRIAL-RELATED"/>
    <property type="match status" value="1"/>
</dbReference>
<dbReference type="Pfam" id="PF07724">
    <property type="entry name" value="AAA_2"/>
    <property type="match status" value="1"/>
</dbReference>
<dbReference type="Pfam" id="PF10431">
    <property type="entry name" value="ClpB_D2-small"/>
    <property type="match status" value="1"/>
</dbReference>
<dbReference type="Pfam" id="PF06689">
    <property type="entry name" value="zf-C4_ClpX"/>
    <property type="match status" value="1"/>
</dbReference>
<dbReference type="SMART" id="SM00382">
    <property type="entry name" value="AAA"/>
    <property type="match status" value="1"/>
</dbReference>
<dbReference type="SMART" id="SM01086">
    <property type="entry name" value="ClpB_D2-small"/>
    <property type="match status" value="1"/>
</dbReference>
<dbReference type="SMART" id="SM00994">
    <property type="entry name" value="zf-C4_ClpX"/>
    <property type="match status" value="1"/>
</dbReference>
<dbReference type="SUPFAM" id="SSF57716">
    <property type="entry name" value="Glucocorticoid receptor-like (DNA-binding domain)"/>
    <property type="match status" value="1"/>
</dbReference>
<dbReference type="SUPFAM" id="SSF52540">
    <property type="entry name" value="P-loop containing nucleoside triphosphate hydrolases"/>
    <property type="match status" value="1"/>
</dbReference>
<dbReference type="PROSITE" id="PS51902">
    <property type="entry name" value="CLPX_ZB"/>
    <property type="match status" value="1"/>
</dbReference>
<name>CLPX_ACAM1</name>
<comment type="function">
    <text evidence="1">ATP-dependent specificity component of the Clp protease. It directs the protease to specific substrates. Can perform chaperone functions in the absence of ClpP.</text>
</comment>
<comment type="subunit">
    <text evidence="1">Component of the ClpX-ClpP complex. Forms a hexameric ring that, in the presence of ATP, binds to fourteen ClpP subunits assembled into a disk-like structure with a central cavity, resembling the structure of eukaryotic proteasomes.</text>
</comment>
<comment type="similarity">
    <text evidence="1">Belongs to the ClpX chaperone family.</text>
</comment>
<gene>
    <name evidence="1" type="primary">clpX</name>
    <name type="ordered locus">AM1_3450</name>
</gene>
<keyword id="KW-0067">ATP-binding</keyword>
<keyword id="KW-0143">Chaperone</keyword>
<keyword id="KW-0479">Metal-binding</keyword>
<keyword id="KW-0547">Nucleotide-binding</keyword>
<keyword id="KW-1185">Reference proteome</keyword>
<keyword id="KW-0862">Zinc</keyword>